<protein>
    <recommendedName>
        <fullName>ATP synthase epsilon chain</fullName>
    </recommendedName>
    <alternativeName>
        <fullName>ATP synthase F1 sector epsilon subunit</fullName>
    </alternativeName>
    <alternativeName>
        <fullName>F-ATPase epsilon subunit</fullName>
    </alternativeName>
</protein>
<comment type="function">
    <text evidence="1">Produces ATP from ADP in the presence of a proton gradient across the membrane.</text>
</comment>
<comment type="subunit">
    <text>F-type ATPases have 2 components, CF(1) - the catalytic core - and CF(0) - the membrane proton channel. CF(1) has five subunits: alpha(3), beta(3), gamma(1), delta(1), epsilon(1). CF(0) has three main subunits: a, b and c.</text>
</comment>
<comment type="subcellular location">
    <subcellularLocation>
        <location evidence="1">Cell membrane</location>
        <topology evidence="1">Peripheral membrane protein</topology>
    </subcellularLocation>
</comment>
<comment type="similarity">
    <text evidence="2">Belongs to the ATPase epsilon chain family.</text>
</comment>
<feature type="chain" id="PRO_0000188096" description="ATP synthase epsilon chain">
    <location>
        <begin position="1"/>
        <end position="134"/>
    </location>
</feature>
<gene>
    <name type="primary">atpC</name>
    <name type="ordered locus">BMQ_5147</name>
</gene>
<proteinExistence type="inferred from homology"/>
<organism>
    <name type="scientific">Priestia megaterium (strain ATCC 12872 / QMB1551)</name>
    <name type="common">Bacillus megaterium</name>
    <dbReference type="NCBI Taxonomy" id="545693"/>
    <lineage>
        <taxon>Bacteria</taxon>
        <taxon>Bacillati</taxon>
        <taxon>Bacillota</taxon>
        <taxon>Bacilli</taxon>
        <taxon>Bacillales</taxon>
        <taxon>Bacillaceae</taxon>
        <taxon>Priestia</taxon>
    </lineage>
</organism>
<accession>P12699</accession>
<accession>D5DWG0</accession>
<evidence type="ECO:0000250" key="1"/>
<evidence type="ECO:0000305" key="2"/>
<dbReference type="EMBL" id="M20255">
    <property type="protein sequence ID" value="AAA82527.1"/>
    <property type="molecule type" value="Genomic_DNA"/>
</dbReference>
<dbReference type="EMBL" id="CP001983">
    <property type="protein sequence ID" value="ADE72125.1"/>
    <property type="molecule type" value="Genomic_DNA"/>
</dbReference>
<dbReference type="PIR" id="B28599">
    <property type="entry name" value="PWBSEM"/>
</dbReference>
<dbReference type="RefSeq" id="WP_013059798.1">
    <property type="nucleotide sequence ID" value="NC_014019.1"/>
</dbReference>
<dbReference type="SMR" id="P12699"/>
<dbReference type="STRING" id="545693.BMQ_5147"/>
<dbReference type="KEGG" id="bmq:BMQ_5147"/>
<dbReference type="eggNOG" id="COG0355">
    <property type="taxonomic scope" value="Bacteria"/>
</dbReference>
<dbReference type="HOGENOM" id="CLU_084338_1_3_9"/>
<dbReference type="Proteomes" id="UP000000935">
    <property type="component" value="Chromosome"/>
</dbReference>
<dbReference type="GO" id="GO:0005886">
    <property type="term" value="C:plasma membrane"/>
    <property type="evidence" value="ECO:0007669"/>
    <property type="project" value="UniProtKB-SubCell"/>
</dbReference>
<dbReference type="GO" id="GO:0045259">
    <property type="term" value="C:proton-transporting ATP synthase complex"/>
    <property type="evidence" value="ECO:0007669"/>
    <property type="project" value="UniProtKB-KW"/>
</dbReference>
<dbReference type="GO" id="GO:0005524">
    <property type="term" value="F:ATP binding"/>
    <property type="evidence" value="ECO:0007669"/>
    <property type="project" value="UniProtKB-UniRule"/>
</dbReference>
<dbReference type="GO" id="GO:0046933">
    <property type="term" value="F:proton-transporting ATP synthase activity, rotational mechanism"/>
    <property type="evidence" value="ECO:0007669"/>
    <property type="project" value="UniProtKB-UniRule"/>
</dbReference>
<dbReference type="CDD" id="cd12152">
    <property type="entry name" value="F1-ATPase_delta"/>
    <property type="match status" value="1"/>
</dbReference>
<dbReference type="FunFam" id="1.20.5.440:FF:000001">
    <property type="entry name" value="ATP synthase epsilon chain"/>
    <property type="match status" value="1"/>
</dbReference>
<dbReference type="FunFam" id="2.60.15.10:FF:000001">
    <property type="entry name" value="ATP synthase epsilon chain"/>
    <property type="match status" value="1"/>
</dbReference>
<dbReference type="Gene3D" id="1.20.5.440">
    <property type="entry name" value="ATP synthase delta/epsilon subunit, C-terminal domain"/>
    <property type="match status" value="1"/>
</dbReference>
<dbReference type="Gene3D" id="2.60.15.10">
    <property type="entry name" value="F0F1 ATP synthase delta/epsilon subunit, N-terminal"/>
    <property type="match status" value="1"/>
</dbReference>
<dbReference type="HAMAP" id="MF_00530">
    <property type="entry name" value="ATP_synth_epsil_bac"/>
    <property type="match status" value="1"/>
</dbReference>
<dbReference type="InterPro" id="IPR036794">
    <property type="entry name" value="ATP_F1_dsu/esu_C_sf"/>
</dbReference>
<dbReference type="InterPro" id="IPR001469">
    <property type="entry name" value="ATP_synth_F1_dsu/esu"/>
</dbReference>
<dbReference type="InterPro" id="IPR020546">
    <property type="entry name" value="ATP_synth_F1_dsu/esu_N"/>
</dbReference>
<dbReference type="InterPro" id="IPR020547">
    <property type="entry name" value="ATP_synth_F1_esu_C"/>
</dbReference>
<dbReference type="InterPro" id="IPR036771">
    <property type="entry name" value="ATPsynth_dsu/esu_N"/>
</dbReference>
<dbReference type="NCBIfam" id="TIGR01216">
    <property type="entry name" value="ATP_synt_epsi"/>
    <property type="match status" value="1"/>
</dbReference>
<dbReference type="NCBIfam" id="NF001846">
    <property type="entry name" value="PRK00571.1-3"/>
    <property type="match status" value="1"/>
</dbReference>
<dbReference type="NCBIfam" id="NF009980">
    <property type="entry name" value="PRK13446.1"/>
    <property type="match status" value="1"/>
</dbReference>
<dbReference type="PANTHER" id="PTHR13822">
    <property type="entry name" value="ATP SYNTHASE DELTA/EPSILON CHAIN"/>
    <property type="match status" value="1"/>
</dbReference>
<dbReference type="PANTHER" id="PTHR13822:SF10">
    <property type="entry name" value="ATP SYNTHASE EPSILON CHAIN, CHLOROPLASTIC"/>
    <property type="match status" value="1"/>
</dbReference>
<dbReference type="Pfam" id="PF00401">
    <property type="entry name" value="ATP-synt_DE"/>
    <property type="match status" value="1"/>
</dbReference>
<dbReference type="Pfam" id="PF02823">
    <property type="entry name" value="ATP-synt_DE_N"/>
    <property type="match status" value="1"/>
</dbReference>
<dbReference type="SUPFAM" id="SSF46604">
    <property type="entry name" value="Epsilon subunit of F1F0-ATP synthase C-terminal domain"/>
    <property type="match status" value="1"/>
</dbReference>
<dbReference type="SUPFAM" id="SSF51344">
    <property type="entry name" value="Epsilon subunit of F1F0-ATP synthase N-terminal domain"/>
    <property type="match status" value="1"/>
</dbReference>
<reference key="1">
    <citation type="journal article" date="1988" name="Biochem. Biophys. Res. Commun.">
        <title>Sequence of the genes for the beta and epsilon subunits of the ATP synthase of Bacillus megaterium QM B1551.</title>
        <authorList>
            <person name="Hawthorne C.A."/>
            <person name="Brusilow W.S.A."/>
        </authorList>
    </citation>
    <scope>NUCLEOTIDE SEQUENCE [GENOMIC DNA]</scope>
</reference>
<reference key="2">
    <citation type="journal article" date="2011" name="J. Bacteriol.">
        <title>Genome sequences of the biotechnologically important Bacillus megaterium strains QM B1551 and DSM319.</title>
        <authorList>
            <person name="Eppinger M."/>
            <person name="Bunk B."/>
            <person name="Johns M.A."/>
            <person name="Edirisinghe J.N."/>
            <person name="Kutumbaka K.K."/>
            <person name="Koenig S.S."/>
            <person name="Creasy H.H."/>
            <person name="Rosovitz M.J."/>
            <person name="Riley D.R."/>
            <person name="Daugherty S."/>
            <person name="Martin M."/>
            <person name="Elbourne L.D."/>
            <person name="Paulsen I."/>
            <person name="Biedendieck R."/>
            <person name="Braun C."/>
            <person name="Grayburn S."/>
            <person name="Dhingra S."/>
            <person name="Lukyanchuk V."/>
            <person name="Ball B."/>
            <person name="Ul-Qamar R."/>
            <person name="Seibel J."/>
            <person name="Bremer E."/>
            <person name="Jahn D."/>
            <person name="Ravel J."/>
            <person name="Vary P.S."/>
        </authorList>
    </citation>
    <scope>NUCLEOTIDE SEQUENCE [LARGE SCALE GENOMIC DNA]</scope>
    <source>
        <strain>ATCC 12872 / DSM 1804 / QMB1551</strain>
    </source>
</reference>
<keyword id="KW-0066">ATP synthesis</keyword>
<keyword id="KW-1003">Cell membrane</keyword>
<keyword id="KW-0139">CF(1)</keyword>
<keyword id="KW-0375">Hydrogen ion transport</keyword>
<keyword id="KW-0406">Ion transport</keyword>
<keyword id="KW-0472">Membrane</keyword>
<keyword id="KW-1185">Reference proteome</keyword>
<keyword id="KW-0813">Transport</keyword>
<name>ATPE_PRIM1</name>
<sequence length="134" mass="14645">MKTIHVSVVTPDGPVYESEVEMVSTRAQSGELGILHGHIPMVAPLQIGAVRLKKASSTELVAVSGGFLEVRPDKVTILAQAAETAEEIDVARAEEAKKRAEMRLDSKQDDVDVKRAEIALKRAVNRLDISQRKF</sequence>